<evidence type="ECO:0000255" key="1">
    <source>
        <dbReference type="HAMAP-Rule" id="MF_00549"/>
    </source>
</evidence>
<evidence type="ECO:0000305" key="2"/>
<comment type="function">
    <text evidence="1">Catalyzes the formation of methylglyoxal from dihydroxyacetone phosphate.</text>
</comment>
<comment type="catalytic activity">
    <reaction evidence="1">
        <text>dihydroxyacetone phosphate = methylglyoxal + phosphate</text>
        <dbReference type="Rhea" id="RHEA:17937"/>
        <dbReference type="ChEBI" id="CHEBI:17158"/>
        <dbReference type="ChEBI" id="CHEBI:43474"/>
        <dbReference type="ChEBI" id="CHEBI:57642"/>
        <dbReference type="EC" id="4.2.3.3"/>
    </reaction>
</comment>
<comment type="similarity">
    <text evidence="1 2">Belongs to the methylglyoxal synthase family.</text>
</comment>
<comment type="sequence caution" evidence="2">
    <conflict type="erroneous initiation">
        <sequence resource="EMBL-CDS" id="AAN42593"/>
    </conflict>
</comment>
<comment type="sequence caution" evidence="2">
    <conflict type="erroneous initiation">
        <sequence resource="EMBL-CDS" id="AAP16479"/>
    </conflict>
</comment>
<keyword id="KW-0456">Lyase</keyword>
<keyword id="KW-1185">Reference proteome</keyword>
<name>MGSA_SHIFL</name>
<protein>
    <recommendedName>
        <fullName evidence="1">Methylglyoxal synthase</fullName>
        <shortName evidence="1">MGS</shortName>
        <ecNumber evidence="1">4.2.3.3</ecNumber>
    </recommendedName>
</protein>
<feature type="chain" id="PRO_0000178646" description="Methylglyoxal synthase">
    <location>
        <begin position="1"/>
        <end position="152"/>
    </location>
</feature>
<feature type="domain" description="MGS-like" evidence="1">
    <location>
        <begin position="6"/>
        <end position="152"/>
    </location>
</feature>
<feature type="active site" description="Proton donor/acceptor" evidence="1">
    <location>
        <position position="71"/>
    </location>
</feature>
<feature type="binding site" evidence="1">
    <location>
        <position position="19"/>
    </location>
    <ligand>
        <name>substrate</name>
    </ligand>
</feature>
<feature type="binding site" evidence="1">
    <location>
        <position position="23"/>
    </location>
    <ligand>
        <name>substrate</name>
    </ligand>
</feature>
<feature type="binding site" evidence="1">
    <location>
        <begin position="45"/>
        <end position="48"/>
    </location>
    <ligand>
        <name>substrate</name>
    </ligand>
</feature>
<feature type="binding site" evidence="1">
    <location>
        <begin position="65"/>
        <end position="66"/>
    </location>
    <ligand>
        <name>substrate</name>
    </ligand>
</feature>
<feature type="binding site" evidence="1">
    <location>
        <position position="98"/>
    </location>
    <ligand>
        <name>substrate</name>
    </ligand>
</feature>
<proteinExistence type="inferred from homology"/>
<gene>
    <name evidence="1" type="primary">mgsA</name>
    <name type="ordered locus">SF0965</name>
    <name type="ordered locus">S1031</name>
</gene>
<sequence length="152" mass="16919">MELTTRTLPARKHIALVAHDHCKQMLMSWVERHQPLLEQHVLYATGTTGNLISRATGMNVNAMLSGPMGGDQQVGALISEGKIDVLIFFWDPLNAVPHDPDVKALLRLATVWNIPVATNVATADFIIQSPHFNDAVDILIPDYQRYLADRLK</sequence>
<reference key="1">
    <citation type="journal article" date="2002" name="Nucleic Acids Res.">
        <title>Genome sequence of Shigella flexneri 2a: insights into pathogenicity through comparison with genomes of Escherichia coli K12 and O157.</title>
        <authorList>
            <person name="Jin Q."/>
            <person name="Yuan Z."/>
            <person name="Xu J."/>
            <person name="Wang Y."/>
            <person name="Shen Y."/>
            <person name="Lu W."/>
            <person name="Wang J."/>
            <person name="Liu H."/>
            <person name="Yang J."/>
            <person name="Yang F."/>
            <person name="Zhang X."/>
            <person name="Zhang J."/>
            <person name="Yang G."/>
            <person name="Wu H."/>
            <person name="Qu D."/>
            <person name="Dong J."/>
            <person name="Sun L."/>
            <person name="Xue Y."/>
            <person name="Zhao A."/>
            <person name="Gao Y."/>
            <person name="Zhu J."/>
            <person name="Kan B."/>
            <person name="Ding K."/>
            <person name="Chen S."/>
            <person name="Cheng H."/>
            <person name="Yao Z."/>
            <person name="He B."/>
            <person name="Chen R."/>
            <person name="Ma D."/>
            <person name="Qiang B."/>
            <person name="Wen Y."/>
            <person name="Hou Y."/>
            <person name="Yu J."/>
        </authorList>
    </citation>
    <scope>NUCLEOTIDE SEQUENCE [LARGE SCALE GENOMIC DNA]</scope>
    <source>
        <strain>301 / Serotype 2a</strain>
    </source>
</reference>
<reference key="2">
    <citation type="journal article" date="2003" name="Infect. Immun.">
        <title>Complete genome sequence and comparative genomics of Shigella flexneri serotype 2a strain 2457T.</title>
        <authorList>
            <person name="Wei J."/>
            <person name="Goldberg M.B."/>
            <person name="Burland V."/>
            <person name="Venkatesan M.M."/>
            <person name="Deng W."/>
            <person name="Fournier G."/>
            <person name="Mayhew G.F."/>
            <person name="Plunkett G. III"/>
            <person name="Rose D.J."/>
            <person name="Darling A."/>
            <person name="Mau B."/>
            <person name="Perna N.T."/>
            <person name="Payne S.M."/>
            <person name="Runyen-Janecky L.J."/>
            <person name="Zhou S."/>
            <person name="Schwartz D.C."/>
            <person name="Blattner F.R."/>
        </authorList>
    </citation>
    <scope>NUCLEOTIDE SEQUENCE [LARGE SCALE GENOMIC DNA]</scope>
    <source>
        <strain>ATCC 700930 / 2457T / Serotype 2a</strain>
    </source>
</reference>
<accession>P0A733</accession>
<accession>P37066</accession>
<accession>P75872</accession>
<accession>Q8XD91</accession>
<accession>Q9R7Q3</accession>
<organism>
    <name type="scientific">Shigella flexneri</name>
    <dbReference type="NCBI Taxonomy" id="623"/>
    <lineage>
        <taxon>Bacteria</taxon>
        <taxon>Pseudomonadati</taxon>
        <taxon>Pseudomonadota</taxon>
        <taxon>Gammaproteobacteria</taxon>
        <taxon>Enterobacterales</taxon>
        <taxon>Enterobacteriaceae</taxon>
        <taxon>Shigella</taxon>
    </lineage>
</organism>
<dbReference type="EC" id="4.2.3.3" evidence="1"/>
<dbReference type="EMBL" id="AE005674">
    <property type="protein sequence ID" value="AAN42593.1"/>
    <property type="status" value="ALT_INIT"/>
    <property type="molecule type" value="Genomic_DNA"/>
</dbReference>
<dbReference type="EMBL" id="AE014073">
    <property type="protein sequence ID" value="AAP16479.1"/>
    <property type="status" value="ALT_INIT"/>
    <property type="molecule type" value="Genomic_DNA"/>
</dbReference>
<dbReference type="RefSeq" id="NP_706886.3">
    <property type="nucleotide sequence ID" value="NC_004337.2"/>
</dbReference>
<dbReference type="RefSeq" id="WP_000424181.1">
    <property type="nucleotide sequence ID" value="NZ_WPGW01000043.1"/>
</dbReference>
<dbReference type="SMR" id="P0A733"/>
<dbReference type="STRING" id="198214.SF0965"/>
<dbReference type="DrugBank" id="DB02726">
    <property type="generic name" value="2-Phosphoglycolic Acid"/>
</dbReference>
<dbReference type="DrugBank" id="DB01942">
    <property type="generic name" value="Formic acid"/>
</dbReference>
<dbReference type="DrugBank" id="DB03026">
    <property type="generic name" value="Phosphoglycolohydroxamic Acid"/>
</dbReference>
<dbReference type="PaxDb" id="198214-SF0965"/>
<dbReference type="GeneID" id="1023912"/>
<dbReference type="GeneID" id="93776451"/>
<dbReference type="KEGG" id="sfl:SF0965"/>
<dbReference type="KEGG" id="sfx:S1031"/>
<dbReference type="PATRIC" id="fig|198214.7.peg.1123"/>
<dbReference type="HOGENOM" id="CLU_120420_0_1_6"/>
<dbReference type="Proteomes" id="UP000001006">
    <property type="component" value="Chromosome"/>
</dbReference>
<dbReference type="Proteomes" id="UP000002673">
    <property type="component" value="Chromosome"/>
</dbReference>
<dbReference type="GO" id="GO:0005829">
    <property type="term" value="C:cytosol"/>
    <property type="evidence" value="ECO:0007669"/>
    <property type="project" value="TreeGrafter"/>
</dbReference>
<dbReference type="GO" id="GO:0008929">
    <property type="term" value="F:methylglyoxal synthase activity"/>
    <property type="evidence" value="ECO:0007669"/>
    <property type="project" value="UniProtKB-UniRule"/>
</dbReference>
<dbReference type="GO" id="GO:0019242">
    <property type="term" value="P:methylglyoxal biosynthetic process"/>
    <property type="evidence" value="ECO:0007669"/>
    <property type="project" value="UniProtKB-UniRule"/>
</dbReference>
<dbReference type="CDD" id="cd01422">
    <property type="entry name" value="MGS"/>
    <property type="match status" value="1"/>
</dbReference>
<dbReference type="FunFam" id="3.40.50.1380:FF:000002">
    <property type="entry name" value="Methylglyoxal synthase"/>
    <property type="match status" value="1"/>
</dbReference>
<dbReference type="Gene3D" id="3.40.50.1380">
    <property type="entry name" value="Methylglyoxal synthase-like domain"/>
    <property type="match status" value="1"/>
</dbReference>
<dbReference type="HAMAP" id="MF_00549">
    <property type="entry name" value="Methylglyoxal_synth"/>
    <property type="match status" value="1"/>
</dbReference>
<dbReference type="InterPro" id="IPR004363">
    <property type="entry name" value="Methylgl_synth"/>
</dbReference>
<dbReference type="InterPro" id="IPR018148">
    <property type="entry name" value="Methylglyoxal_synth_AS"/>
</dbReference>
<dbReference type="InterPro" id="IPR011607">
    <property type="entry name" value="MGS-like_dom"/>
</dbReference>
<dbReference type="InterPro" id="IPR036914">
    <property type="entry name" value="MGS-like_dom_sf"/>
</dbReference>
<dbReference type="NCBIfam" id="TIGR00160">
    <property type="entry name" value="MGSA"/>
    <property type="match status" value="1"/>
</dbReference>
<dbReference type="NCBIfam" id="NF003559">
    <property type="entry name" value="PRK05234.1"/>
    <property type="match status" value="1"/>
</dbReference>
<dbReference type="PANTHER" id="PTHR30492">
    <property type="entry name" value="METHYLGLYOXAL SYNTHASE"/>
    <property type="match status" value="1"/>
</dbReference>
<dbReference type="PANTHER" id="PTHR30492:SF0">
    <property type="entry name" value="METHYLGLYOXAL SYNTHASE"/>
    <property type="match status" value="1"/>
</dbReference>
<dbReference type="Pfam" id="PF02142">
    <property type="entry name" value="MGS"/>
    <property type="match status" value="1"/>
</dbReference>
<dbReference type="PIRSF" id="PIRSF006614">
    <property type="entry name" value="Methylglyox_syn"/>
    <property type="match status" value="1"/>
</dbReference>
<dbReference type="SMART" id="SM00851">
    <property type="entry name" value="MGS"/>
    <property type="match status" value="1"/>
</dbReference>
<dbReference type="SUPFAM" id="SSF52335">
    <property type="entry name" value="Methylglyoxal synthase-like"/>
    <property type="match status" value="1"/>
</dbReference>
<dbReference type="PROSITE" id="PS01335">
    <property type="entry name" value="METHYLGLYOXAL_SYNTH"/>
    <property type="match status" value="1"/>
</dbReference>
<dbReference type="PROSITE" id="PS51855">
    <property type="entry name" value="MGS"/>
    <property type="match status" value="1"/>
</dbReference>